<evidence type="ECO:0000255" key="1">
    <source>
        <dbReference type="HAMAP-Rule" id="MF_01554"/>
    </source>
</evidence>
<evidence type="ECO:0000305" key="2"/>
<feature type="chain" id="PRO_0000305681" description="Phosphoglucosamine mutase">
    <location>
        <begin position="1"/>
        <end position="449"/>
    </location>
</feature>
<feature type="active site" description="Phosphoserine intermediate" evidence="1">
    <location>
        <position position="101"/>
    </location>
</feature>
<feature type="binding site" description="via phosphate group" evidence="1">
    <location>
        <position position="101"/>
    </location>
    <ligand>
        <name>Mg(2+)</name>
        <dbReference type="ChEBI" id="CHEBI:18420"/>
    </ligand>
</feature>
<feature type="binding site" evidence="1">
    <location>
        <position position="240"/>
    </location>
    <ligand>
        <name>Mg(2+)</name>
        <dbReference type="ChEBI" id="CHEBI:18420"/>
    </ligand>
</feature>
<feature type="binding site" evidence="1">
    <location>
        <position position="242"/>
    </location>
    <ligand>
        <name>Mg(2+)</name>
        <dbReference type="ChEBI" id="CHEBI:18420"/>
    </ligand>
</feature>
<feature type="binding site" evidence="1">
    <location>
        <position position="244"/>
    </location>
    <ligand>
        <name>Mg(2+)</name>
        <dbReference type="ChEBI" id="CHEBI:18420"/>
    </ligand>
</feature>
<feature type="modified residue" description="Phosphoserine" evidence="1">
    <location>
        <position position="101"/>
    </location>
</feature>
<protein>
    <recommendedName>
        <fullName evidence="1">Phosphoglucosamine mutase</fullName>
        <ecNumber evidence="1">5.4.2.10</ecNumber>
    </recommendedName>
</protein>
<dbReference type="EC" id="5.4.2.10" evidence="1"/>
<dbReference type="EMBL" id="CP000407">
    <property type="protein sequence ID" value="ABP90434.1"/>
    <property type="status" value="ALT_INIT"/>
    <property type="molecule type" value="Genomic_DNA"/>
</dbReference>
<dbReference type="SMR" id="A4VWE5"/>
<dbReference type="STRING" id="391295.SSU05_1468"/>
<dbReference type="KEGG" id="ssu:SSU05_1468"/>
<dbReference type="eggNOG" id="COG1109">
    <property type="taxonomic scope" value="Bacteria"/>
</dbReference>
<dbReference type="HOGENOM" id="CLU_016950_7_0_9"/>
<dbReference type="GO" id="GO:0005829">
    <property type="term" value="C:cytosol"/>
    <property type="evidence" value="ECO:0007669"/>
    <property type="project" value="TreeGrafter"/>
</dbReference>
<dbReference type="GO" id="GO:0000287">
    <property type="term" value="F:magnesium ion binding"/>
    <property type="evidence" value="ECO:0007669"/>
    <property type="project" value="UniProtKB-UniRule"/>
</dbReference>
<dbReference type="GO" id="GO:0008966">
    <property type="term" value="F:phosphoglucosamine mutase activity"/>
    <property type="evidence" value="ECO:0007669"/>
    <property type="project" value="UniProtKB-UniRule"/>
</dbReference>
<dbReference type="GO" id="GO:0004615">
    <property type="term" value="F:phosphomannomutase activity"/>
    <property type="evidence" value="ECO:0007669"/>
    <property type="project" value="TreeGrafter"/>
</dbReference>
<dbReference type="GO" id="GO:0005975">
    <property type="term" value="P:carbohydrate metabolic process"/>
    <property type="evidence" value="ECO:0007669"/>
    <property type="project" value="InterPro"/>
</dbReference>
<dbReference type="GO" id="GO:0009252">
    <property type="term" value="P:peptidoglycan biosynthetic process"/>
    <property type="evidence" value="ECO:0007669"/>
    <property type="project" value="TreeGrafter"/>
</dbReference>
<dbReference type="GO" id="GO:0006048">
    <property type="term" value="P:UDP-N-acetylglucosamine biosynthetic process"/>
    <property type="evidence" value="ECO:0007669"/>
    <property type="project" value="TreeGrafter"/>
</dbReference>
<dbReference type="CDD" id="cd05802">
    <property type="entry name" value="GlmM"/>
    <property type="match status" value="1"/>
</dbReference>
<dbReference type="FunFam" id="3.30.310.50:FF:000001">
    <property type="entry name" value="Phosphoglucosamine mutase"/>
    <property type="match status" value="1"/>
</dbReference>
<dbReference type="FunFam" id="3.40.120.10:FF:000001">
    <property type="entry name" value="Phosphoglucosamine mutase"/>
    <property type="match status" value="1"/>
</dbReference>
<dbReference type="FunFam" id="3.40.120.10:FF:000002">
    <property type="entry name" value="Phosphoglucosamine mutase"/>
    <property type="match status" value="1"/>
</dbReference>
<dbReference type="Gene3D" id="3.40.120.10">
    <property type="entry name" value="Alpha-D-Glucose-1,6-Bisphosphate, subunit A, domain 3"/>
    <property type="match status" value="3"/>
</dbReference>
<dbReference type="Gene3D" id="3.30.310.50">
    <property type="entry name" value="Alpha-D-phosphohexomutase, C-terminal domain"/>
    <property type="match status" value="1"/>
</dbReference>
<dbReference type="HAMAP" id="MF_01554_B">
    <property type="entry name" value="GlmM_B"/>
    <property type="match status" value="1"/>
</dbReference>
<dbReference type="InterPro" id="IPR005844">
    <property type="entry name" value="A-D-PHexomutase_a/b/a-I"/>
</dbReference>
<dbReference type="InterPro" id="IPR016055">
    <property type="entry name" value="A-D-PHexomutase_a/b/a-I/II/III"/>
</dbReference>
<dbReference type="InterPro" id="IPR005845">
    <property type="entry name" value="A-D-PHexomutase_a/b/a-II"/>
</dbReference>
<dbReference type="InterPro" id="IPR005846">
    <property type="entry name" value="A-D-PHexomutase_a/b/a-III"/>
</dbReference>
<dbReference type="InterPro" id="IPR005843">
    <property type="entry name" value="A-D-PHexomutase_C"/>
</dbReference>
<dbReference type="InterPro" id="IPR036900">
    <property type="entry name" value="A-D-PHexomutase_C_sf"/>
</dbReference>
<dbReference type="InterPro" id="IPR016066">
    <property type="entry name" value="A-D-PHexomutase_CS"/>
</dbReference>
<dbReference type="InterPro" id="IPR005841">
    <property type="entry name" value="Alpha-D-phosphohexomutase_SF"/>
</dbReference>
<dbReference type="InterPro" id="IPR006352">
    <property type="entry name" value="GlmM_bact"/>
</dbReference>
<dbReference type="InterPro" id="IPR050060">
    <property type="entry name" value="Phosphoglucosamine_mutase"/>
</dbReference>
<dbReference type="NCBIfam" id="TIGR01455">
    <property type="entry name" value="glmM"/>
    <property type="match status" value="1"/>
</dbReference>
<dbReference type="PANTHER" id="PTHR42946:SF1">
    <property type="entry name" value="PHOSPHOGLUCOMUTASE (ALPHA-D-GLUCOSE-1,6-BISPHOSPHATE-DEPENDENT)"/>
    <property type="match status" value="1"/>
</dbReference>
<dbReference type="PANTHER" id="PTHR42946">
    <property type="entry name" value="PHOSPHOHEXOSE MUTASE"/>
    <property type="match status" value="1"/>
</dbReference>
<dbReference type="Pfam" id="PF02878">
    <property type="entry name" value="PGM_PMM_I"/>
    <property type="match status" value="1"/>
</dbReference>
<dbReference type="Pfam" id="PF02879">
    <property type="entry name" value="PGM_PMM_II"/>
    <property type="match status" value="1"/>
</dbReference>
<dbReference type="Pfam" id="PF02880">
    <property type="entry name" value="PGM_PMM_III"/>
    <property type="match status" value="1"/>
</dbReference>
<dbReference type="Pfam" id="PF00408">
    <property type="entry name" value="PGM_PMM_IV"/>
    <property type="match status" value="1"/>
</dbReference>
<dbReference type="PRINTS" id="PR00509">
    <property type="entry name" value="PGMPMM"/>
</dbReference>
<dbReference type="SUPFAM" id="SSF55957">
    <property type="entry name" value="Phosphoglucomutase, C-terminal domain"/>
    <property type="match status" value="1"/>
</dbReference>
<dbReference type="SUPFAM" id="SSF53738">
    <property type="entry name" value="Phosphoglucomutase, first 3 domains"/>
    <property type="match status" value="3"/>
</dbReference>
<dbReference type="PROSITE" id="PS00710">
    <property type="entry name" value="PGM_PMM"/>
    <property type="match status" value="1"/>
</dbReference>
<reference key="1">
    <citation type="journal article" date="2007" name="PLoS ONE">
        <title>A glimpse of streptococcal toxic shock syndrome from comparative genomics of S. suis 2 Chinese isolates.</title>
        <authorList>
            <person name="Chen C."/>
            <person name="Tang J."/>
            <person name="Dong W."/>
            <person name="Wang C."/>
            <person name="Feng Y."/>
            <person name="Wang J."/>
            <person name="Zheng F."/>
            <person name="Pan X."/>
            <person name="Liu D."/>
            <person name="Li M."/>
            <person name="Song Y."/>
            <person name="Zhu X."/>
            <person name="Sun H."/>
            <person name="Feng T."/>
            <person name="Guo Z."/>
            <person name="Ju A."/>
            <person name="Ge J."/>
            <person name="Dong Y."/>
            <person name="Sun W."/>
            <person name="Jiang Y."/>
            <person name="Wang J."/>
            <person name="Yan J."/>
            <person name="Yang H."/>
            <person name="Wang X."/>
            <person name="Gao G.F."/>
            <person name="Yang R."/>
            <person name="Wang J."/>
            <person name="Yu J."/>
        </authorList>
    </citation>
    <scope>NUCLEOTIDE SEQUENCE [LARGE SCALE GENOMIC DNA]</scope>
    <source>
        <strain>05ZYH33</strain>
    </source>
</reference>
<proteinExistence type="inferred from homology"/>
<accession>A4VWE5</accession>
<sequence length="449" mass="48105">MGKYFGTDGVRGEANVELTPELAFKLGRFGGYVLSQHETDVPRVFVARDTRISGQMLEAALIAGLLSVGIHVYKLGVLATPGVAHLVKTEKASAGVMISASHNPAQDNGIKFFAGDGFKLDDALEAEIEALLDAEEDTLPRPSAQGLGDVVEYPEGLRKYQQFLVSTGTDLDGMKVALDTANGAAATSARQIFVDLGADLTVMAEKPDGLNINEGVGSTHPEKLQELVKETGSQIGLAFDGDSDRLIAVDENGVLVDGDRIMYIVGKYLADRGLLAKNTIVTTVMSNLGFHKALDREGIEKAVTAVGDRYVVEEMRKEGYNVGGEQSGHVILMDYNTTGDGQLTAVQLTKIMKETGKKLSELAAEVTIYPQKLVNIRVENSMKDKAMEVPAIAAIIEKMEAEMAGNGRILVRPSGTEPLLRVMAEAPTDAEVDYYVDTIADVVRAEIGS</sequence>
<keyword id="KW-0413">Isomerase</keyword>
<keyword id="KW-0460">Magnesium</keyword>
<keyword id="KW-0479">Metal-binding</keyword>
<keyword id="KW-0597">Phosphoprotein</keyword>
<name>GLMM_STRSY</name>
<gene>
    <name evidence="1" type="primary">glmM</name>
    <name type="ordered locus">SSU05_1468</name>
</gene>
<organism>
    <name type="scientific">Streptococcus suis (strain 05ZYH33)</name>
    <dbReference type="NCBI Taxonomy" id="391295"/>
    <lineage>
        <taxon>Bacteria</taxon>
        <taxon>Bacillati</taxon>
        <taxon>Bacillota</taxon>
        <taxon>Bacilli</taxon>
        <taxon>Lactobacillales</taxon>
        <taxon>Streptococcaceae</taxon>
        <taxon>Streptococcus</taxon>
    </lineage>
</organism>
<comment type="function">
    <text evidence="1">Catalyzes the conversion of glucosamine-6-phosphate to glucosamine-1-phosphate.</text>
</comment>
<comment type="catalytic activity">
    <reaction evidence="1">
        <text>alpha-D-glucosamine 1-phosphate = D-glucosamine 6-phosphate</text>
        <dbReference type="Rhea" id="RHEA:23424"/>
        <dbReference type="ChEBI" id="CHEBI:58516"/>
        <dbReference type="ChEBI" id="CHEBI:58725"/>
        <dbReference type="EC" id="5.4.2.10"/>
    </reaction>
</comment>
<comment type="cofactor">
    <cofactor evidence="1">
        <name>Mg(2+)</name>
        <dbReference type="ChEBI" id="CHEBI:18420"/>
    </cofactor>
    <text evidence="1">Binds 1 Mg(2+) ion per subunit.</text>
</comment>
<comment type="PTM">
    <text evidence="1">Activated by phosphorylation.</text>
</comment>
<comment type="similarity">
    <text evidence="1">Belongs to the phosphohexose mutase family.</text>
</comment>
<comment type="sequence caution" evidence="2">
    <conflict type="erroneous initiation">
        <sequence resource="EMBL-CDS" id="ABP90434"/>
    </conflict>
</comment>